<sequence>MALEFPVIDPIIFSVGPLSVRWYGLMYLIGFAFAMWFANRQAAKPNSGWTKDQVGDFLFYGMLGVILGGRIGYVLFYQFSYFIENPLYLFRIDQGGMSFHGGTLGVITAVVIFAWTRKKSILQVGDFVAPLVPVGLLAGRIGNFINGELWGRVSDVPWAMVFPTGGPLARHPSQLYEAFFEGLVLFLILQWFIKKPRPAGSVAGVFLLGYGTFRFCIEYFRQPDAQLGLFADFISMGQILSLPMIVGGLGLLIWAYKQATQKTAVKG</sequence>
<feature type="chain" id="PRO_1000073056" description="Phosphatidylglycerol--prolipoprotein diacylglyceryl transferase">
    <location>
        <begin position="1"/>
        <end position="267"/>
    </location>
</feature>
<feature type="transmembrane region" description="Helical" evidence="1">
    <location>
        <begin position="18"/>
        <end position="38"/>
    </location>
</feature>
<feature type="transmembrane region" description="Helical" evidence="1">
    <location>
        <begin position="57"/>
        <end position="77"/>
    </location>
</feature>
<feature type="transmembrane region" description="Helical" evidence="1">
    <location>
        <begin position="95"/>
        <end position="115"/>
    </location>
</feature>
<feature type="transmembrane region" description="Helical" evidence="1">
    <location>
        <begin position="173"/>
        <end position="193"/>
    </location>
</feature>
<feature type="transmembrane region" description="Helical" evidence="1">
    <location>
        <begin position="200"/>
        <end position="220"/>
    </location>
</feature>
<feature type="transmembrane region" description="Helical" evidence="1">
    <location>
        <begin position="233"/>
        <end position="253"/>
    </location>
</feature>
<feature type="binding site" evidence="1">
    <location>
        <position position="140"/>
    </location>
    <ligand>
        <name>a 1,2-diacyl-sn-glycero-3-phospho-(1'-sn-glycerol)</name>
        <dbReference type="ChEBI" id="CHEBI:64716"/>
    </ligand>
</feature>
<reference key="1">
    <citation type="journal article" date="2005" name="Genome Res.">
        <title>Coping with cold: the genome of the versatile marine Antarctica bacterium Pseudoalteromonas haloplanktis TAC125.</title>
        <authorList>
            <person name="Medigue C."/>
            <person name="Krin E."/>
            <person name="Pascal G."/>
            <person name="Barbe V."/>
            <person name="Bernsel A."/>
            <person name="Bertin P.N."/>
            <person name="Cheung F."/>
            <person name="Cruveiller S."/>
            <person name="D'Amico S."/>
            <person name="Duilio A."/>
            <person name="Fang G."/>
            <person name="Feller G."/>
            <person name="Ho C."/>
            <person name="Mangenot S."/>
            <person name="Marino G."/>
            <person name="Nilsson J."/>
            <person name="Parrilli E."/>
            <person name="Rocha E.P.C."/>
            <person name="Rouy Z."/>
            <person name="Sekowska A."/>
            <person name="Tutino M.L."/>
            <person name="Vallenet D."/>
            <person name="von Heijne G."/>
            <person name="Danchin A."/>
        </authorList>
    </citation>
    <scope>NUCLEOTIDE SEQUENCE [LARGE SCALE GENOMIC DNA]</scope>
    <source>
        <strain>TAC 125</strain>
    </source>
</reference>
<gene>
    <name evidence="1" type="primary">lgt</name>
    <name type="ordered locus">PSHAa0748</name>
</gene>
<organism>
    <name type="scientific">Pseudoalteromonas translucida (strain TAC 125)</name>
    <dbReference type="NCBI Taxonomy" id="326442"/>
    <lineage>
        <taxon>Bacteria</taxon>
        <taxon>Pseudomonadati</taxon>
        <taxon>Pseudomonadota</taxon>
        <taxon>Gammaproteobacteria</taxon>
        <taxon>Alteromonadales</taxon>
        <taxon>Pseudoalteromonadaceae</taxon>
        <taxon>Pseudoalteromonas</taxon>
    </lineage>
</organism>
<dbReference type="EC" id="2.5.1.145" evidence="1"/>
<dbReference type="EMBL" id="CR954246">
    <property type="protein sequence ID" value="CAI85831.1"/>
    <property type="molecule type" value="Genomic_DNA"/>
</dbReference>
<dbReference type="SMR" id="Q3IDN2"/>
<dbReference type="STRING" id="326442.PSHAa0748"/>
<dbReference type="KEGG" id="pha:PSHAa0748"/>
<dbReference type="PATRIC" id="fig|326442.8.peg.711"/>
<dbReference type="eggNOG" id="COG0682">
    <property type="taxonomic scope" value="Bacteria"/>
</dbReference>
<dbReference type="HOGENOM" id="CLU_013386_1_0_6"/>
<dbReference type="BioCyc" id="PHAL326442:PSHA_RS03650-MONOMER"/>
<dbReference type="UniPathway" id="UPA00664"/>
<dbReference type="Proteomes" id="UP000006843">
    <property type="component" value="Chromosome I"/>
</dbReference>
<dbReference type="GO" id="GO:0005886">
    <property type="term" value="C:plasma membrane"/>
    <property type="evidence" value="ECO:0007669"/>
    <property type="project" value="UniProtKB-SubCell"/>
</dbReference>
<dbReference type="GO" id="GO:0008961">
    <property type="term" value="F:phosphatidylglycerol-prolipoprotein diacylglyceryl transferase activity"/>
    <property type="evidence" value="ECO:0007669"/>
    <property type="project" value="UniProtKB-UniRule"/>
</dbReference>
<dbReference type="GO" id="GO:0042158">
    <property type="term" value="P:lipoprotein biosynthetic process"/>
    <property type="evidence" value="ECO:0007669"/>
    <property type="project" value="UniProtKB-UniRule"/>
</dbReference>
<dbReference type="HAMAP" id="MF_01147">
    <property type="entry name" value="Lgt"/>
    <property type="match status" value="1"/>
</dbReference>
<dbReference type="InterPro" id="IPR001640">
    <property type="entry name" value="Lgt"/>
</dbReference>
<dbReference type="NCBIfam" id="TIGR00544">
    <property type="entry name" value="lgt"/>
    <property type="match status" value="1"/>
</dbReference>
<dbReference type="PANTHER" id="PTHR30589:SF0">
    <property type="entry name" value="PHOSPHATIDYLGLYCEROL--PROLIPOPROTEIN DIACYLGLYCERYL TRANSFERASE"/>
    <property type="match status" value="1"/>
</dbReference>
<dbReference type="PANTHER" id="PTHR30589">
    <property type="entry name" value="PROLIPOPROTEIN DIACYLGLYCERYL TRANSFERASE"/>
    <property type="match status" value="1"/>
</dbReference>
<dbReference type="Pfam" id="PF01790">
    <property type="entry name" value="LGT"/>
    <property type="match status" value="1"/>
</dbReference>
<dbReference type="PROSITE" id="PS01311">
    <property type="entry name" value="LGT"/>
    <property type="match status" value="1"/>
</dbReference>
<keyword id="KW-0997">Cell inner membrane</keyword>
<keyword id="KW-1003">Cell membrane</keyword>
<keyword id="KW-0472">Membrane</keyword>
<keyword id="KW-1185">Reference proteome</keyword>
<keyword id="KW-0808">Transferase</keyword>
<keyword id="KW-0812">Transmembrane</keyword>
<keyword id="KW-1133">Transmembrane helix</keyword>
<accession>Q3IDN2</accession>
<name>LGT_PSET1</name>
<evidence type="ECO:0000255" key="1">
    <source>
        <dbReference type="HAMAP-Rule" id="MF_01147"/>
    </source>
</evidence>
<proteinExistence type="inferred from homology"/>
<protein>
    <recommendedName>
        <fullName evidence="1">Phosphatidylglycerol--prolipoprotein diacylglyceryl transferase</fullName>
        <ecNumber evidence="1">2.5.1.145</ecNumber>
    </recommendedName>
</protein>
<comment type="function">
    <text evidence="1">Catalyzes the transfer of the diacylglyceryl group from phosphatidylglycerol to the sulfhydryl group of the N-terminal cysteine of a prolipoprotein, the first step in the formation of mature lipoproteins.</text>
</comment>
<comment type="catalytic activity">
    <reaction evidence="1">
        <text>L-cysteinyl-[prolipoprotein] + a 1,2-diacyl-sn-glycero-3-phospho-(1'-sn-glycerol) = an S-1,2-diacyl-sn-glyceryl-L-cysteinyl-[prolipoprotein] + sn-glycerol 1-phosphate + H(+)</text>
        <dbReference type="Rhea" id="RHEA:56712"/>
        <dbReference type="Rhea" id="RHEA-COMP:14679"/>
        <dbReference type="Rhea" id="RHEA-COMP:14680"/>
        <dbReference type="ChEBI" id="CHEBI:15378"/>
        <dbReference type="ChEBI" id="CHEBI:29950"/>
        <dbReference type="ChEBI" id="CHEBI:57685"/>
        <dbReference type="ChEBI" id="CHEBI:64716"/>
        <dbReference type="ChEBI" id="CHEBI:140658"/>
        <dbReference type="EC" id="2.5.1.145"/>
    </reaction>
</comment>
<comment type="pathway">
    <text evidence="1">Protein modification; lipoprotein biosynthesis (diacylglyceryl transfer).</text>
</comment>
<comment type="subcellular location">
    <subcellularLocation>
        <location evidence="1">Cell inner membrane</location>
        <topology evidence="1">Multi-pass membrane protein</topology>
    </subcellularLocation>
</comment>
<comment type="similarity">
    <text evidence="1">Belongs to the Lgt family.</text>
</comment>